<name>TAL_HELP2</name>
<comment type="function">
    <text evidence="1">Transaldolase is important for the balance of metabolites in the pentose-phosphate pathway.</text>
</comment>
<comment type="catalytic activity">
    <reaction evidence="1">
        <text>D-sedoheptulose 7-phosphate + D-glyceraldehyde 3-phosphate = D-erythrose 4-phosphate + beta-D-fructose 6-phosphate</text>
        <dbReference type="Rhea" id="RHEA:17053"/>
        <dbReference type="ChEBI" id="CHEBI:16897"/>
        <dbReference type="ChEBI" id="CHEBI:57483"/>
        <dbReference type="ChEBI" id="CHEBI:57634"/>
        <dbReference type="ChEBI" id="CHEBI:59776"/>
        <dbReference type="EC" id="2.2.1.2"/>
    </reaction>
</comment>
<comment type="pathway">
    <text evidence="1">Carbohydrate degradation; pentose phosphate pathway; D-glyceraldehyde 3-phosphate and beta-D-fructose 6-phosphate from D-ribose 5-phosphate and D-xylulose 5-phosphate (non-oxidative stage): step 2/3.</text>
</comment>
<comment type="subcellular location">
    <subcellularLocation>
        <location evidence="1">Cytoplasm</location>
    </subcellularLocation>
</comment>
<comment type="similarity">
    <text evidence="1">Belongs to the transaldolase family. Type 2 subfamily.</text>
</comment>
<dbReference type="EC" id="2.2.1.2" evidence="1"/>
<dbReference type="EMBL" id="CP001217">
    <property type="protein sequence ID" value="ACJ08621.1"/>
    <property type="molecule type" value="Genomic_DNA"/>
</dbReference>
<dbReference type="SMR" id="B6JNZ3"/>
<dbReference type="KEGG" id="hpp:HPP12_1473"/>
<dbReference type="HOGENOM" id="CLU_050771_1_0_7"/>
<dbReference type="UniPathway" id="UPA00115">
    <property type="reaction ID" value="UER00414"/>
</dbReference>
<dbReference type="Proteomes" id="UP000008198">
    <property type="component" value="Chromosome"/>
</dbReference>
<dbReference type="GO" id="GO:0005737">
    <property type="term" value="C:cytoplasm"/>
    <property type="evidence" value="ECO:0007669"/>
    <property type="project" value="UniProtKB-SubCell"/>
</dbReference>
<dbReference type="GO" id="GO:0004801">
    <property type="term" value="F:transaldolase activity"/>
    <property type="evidence" value="ECO:0007669"/>
    <property type="project" value="UniProtKB-UniRule"/>
</dbReference>
<dbReference type="GO" id="GO:0005975">
    <property type="term" value="P:carbohydrate metabolic process"/>
    <property type="evidence" value="ECO:0007669"/>
    <property type="project" value="InterPro"/>
</dbReference>
<dbReference type="GO" id="GO:0006098">
    <property type="term" value="P:pentose-phosphate shunt"/>
    <property type="evidence" value="ECO:0007669"/>
    <property type="project" value="UniProtKB-UniRule"/>
</dbReference>
<dbReference type="CDD" id="cd00955">
    <property type="entry name" value="Transaldolase_like"/>
    <property type="match status" value="1"/>
</dbReference>
<dbReference type="Gene3D" id="3.20.20.70">
    <property type="entry name" value="Aldolase class I"/>
    <property type="match status" value="1"/>
</dbReference>
<dbReference type="HAMAP" id="MF_00493">
    <property type="entry name" value="Transaldolase_2"/>
    <property type="match status" value="1"/>
</dbReference>
<dbReference type="InterPro" id="IPR013785">
    <property type="entry name" value="Aldolase_TIM"/>
</dbReference>
<dbReference type="InterPro" id="IPR001585">
    <property type="entry name" value="TAL/FSA"/>
</dbReference>
<dbReference type="InterPro" id="IPR004732">
    <property type="entry name" value="Transaldolase_2"/>
</dbReference>
<dbReference type="InterPro" id="IPR018225">
    <property type="entry name" value="Transaldolase_AS"/>
</dbReference>
<dbReference type="NCBIfam" id="NF003026">
    <property type="entry name" value="PRK03903.1"/>
    <property type="match status" value="1"/>
</dbReference>
<dbReference type="NCBIfam" id="TIGR00876">
    <property type="entry name" value="tal_mycobact"/>
    <property type="match status" value="1"/>
</dbReference>
<dbReference type="PANTHER" id="PTHR10683">
    <property type="entry name" value="TRANSALDOLASE"/>
    <property type="match status" value="1"/>
</dbReference>
<dbReference type="PANTHER" id="PTHR10683:SF31">
    <property type="entry name" value="TRANSALDOLASE"/>
    <property type="match status" value="1"/>
</dbReference>
<dbReference type="Pfam" id="PF00923">
    <property type="entry name" value="TAL_FSA"/>
    <property type="match status" value="1"/>
</dbReference>
<dbReference type="PIRSF" id="PIRSF036915">
    <property type="entry name" value="Trnald_Bac_Plnt"/>
    <property type="match status" value="1"/>
</dbReference>
<dbReference type="SUPFAM" id="SSF51569">
    <property type="entry name" value="Aldolase"/>
    <property type="match status" value="1"/>
</dbReference>
<dbReference type="PROSITE" id="PS01054">
    <property type="entry name" value="TRANSALDOLASE_1"/>
    <property type="match status" value="1"/>
</dbReference>
<sequence length="316" mass="35310">MQEFSLWCDFIERDFLENDFLKLINKGAICGATSNPSLFCEAITKSAFYQDEIAKLKGKKAKEIYETLALKDILQASSALMPLYEKNPNNGYISLEIDPFLEDDAIKSIDEAKRLFKTLNRPNVMIKVPASTSGFEVISALAQASIPINVTLVFSPKIAGEIAQILAKEAQKRAVISVFVSRFDKEIDPLVPKNLQAQSGIINATECYYQISQHANKLISTLFASTGVKSNSLAKDYYIKALCFKNSINTAPLEALNAYLLDPNTEYQTPLKIAEIEAFKKELKTHNIDLENTAQKLLKEGLIAFKQSFEKLLKSF</sequence>
<feature type="chain" id="PRO_1000126265" description="Transaldolase">
    <location>
        <begin position="1"/>
        <end position="316"/>
    </location>
</feature>
<feature type="active site" description="Schiff-base intermediate with substrate" evidence="1">
    <location>
        <position position="127"/>
    </location>
</feature>
<evidence type="ECO:0000255" key="1">
    <source>
        <dbReference type="HAMAP-Rule" id="MF_00493"/>
    </source>
</evidence>
<accession>B6JNZ3</accession>
<organism>
    <name type="scientific">Helicobacter pylori (strain P12)</name>
    <dbReference type="NCBI Taxonomy" id="570508"/>
    <lineage>
        <taxon>Bacteria</taxon>
        <taxon>Pseudomonadati</taxon>
        <taxon>Campylobacterota</taxon>
        <taxon>Epsilonproteobacteria</taxon>
        <taxon>Campylobacterales</taxon>
        <taxon>Helicobacteraceae</taxon>
        <taxon>Helicobacter</taxon>
    </lineage>
</organism>
<reference key="1">
    <citation type="submission" date="2008-10" db="EMBL/GenBank/DDBJ databases">
        <title>The complete genome sequence of Helicobacter pylori strain P12.</title>
        <authorList>
            <person name="Fischer W."/>
            <person name="Windhager L."/>
            <person name="Karnholz A."/>
            <person name="Zeiller M."/>
            <person name="Zimmer R."/>
            <person name="Haas R."/>
        </authorList>
    </citation>
    <scope>NUCLEOTIDE SEQUENCE [LARGE SCALE GENOMIC DNA]</scope>
    <source>
        <strain>P12</strain>
    </source>
</reference>
<gene>
    <name evidence="1" type="primary">tal</name>
    <name type="ordered locus">HPP12_1473</name>
</gene>
<protein>
    <recommendedName>
        <fullName evidence="1">Transaldolase</fullName>
        <ecNumber evidence="1">2.2.1.2</ecNumber>
    </recommendedName>
</protein>
<keyword id="KW-0963">Cytoplasm</keyword>
<keyword id="KW-0570">Pentose shunt</keyword>
<keyword id="KW-0704">Schiff base</keyword>
<keyword id="KW-0808">Transferase</keyword>
<proteinExistence type="inferred from homology"/>